<comment type="function">
    <text evidence="1 5 9 10">Lipid-binding protein which promotes lipid absorption by facilitating MTTP-mediated lipid transfer (mainly triglycerides and phospholipids) and MTTP-mediated apoB lipoprotein assembly and secretion (By similarity). Protects the gastrointestinal epithelium from irradiation-induced apoptosis (By similarity). May play an important role in maintaining normal growth homeostasis in epithelial cells (PubMed:14583459). Involved in p53/TP53-dependent cell survival after DNA damage (PubMed:23235459). May down-regulate the expression of MAD1L1 and exert a suppressive role in mitotic spindle assembly checkpoint in hepatocellular carcinomas (PubMed:24374861).</text>
</comment>
<comment type="subunit">
    <text evidence="1 10">Interacts with isoform 1 and isoform 3 of MAD1L1 (PubMed:24374861). Interacts with MTTP (By similarity).</text>
</comment>
<comment type="interaction">
    <interactant intactId="EBI-2116102">
        <id>Q96NZ9</id>
    </interactant>
    <interactant intactId="EBI-12078468">
        <id>Q8IVF2-3</id>
        <label>AHNAK2</label>
    </interactant>
    <organismsDiffer>false</organismsDiffer>
    <experiments>3</experiments>
</comment>
<comment type="interaction">
    <interactant intactId="EBI-2116102">
        <id>Q96NZ9</id>
    </interactant>
    <interactant intactId="EBI-12092171">
        <id>Q12797-6</id>
        <label>ASPH</label>
    </interactant>
    <organismsDiffer>false</organismsDiffer>
    <experiments>3</experiments>
</comment>
<comment type="interaction">
    <interactant intactId="EBI-2116102">
        <id>Q96NZ9</id>
    </interactant>
    <interactant intactId="EBI-741885">
        <id>Q96LK0</id>
        <label>CEP19</label>
    </interactant>
    <organismsDiffer>false</organismsDiffer>
    <experiments>3</experiments>
</comment>
<comment type="interaction">
    <interactant intactId="EBI-2116102">
        <id>Q96NZ9</id>
    </interactant>
    <interactant intactId="EBI-355106">
        <id>P17066</id>
        <label>HSPA6</label>
    </interactant>
    <organismsDiffer>false</organismsDiffer>
    <experiments>3</experiments>
</comment>
<comment type="interaction">
    <interactant intactId="EBI-2116102">
        <id>Q96NZ9</id>
    </interactant>
    <interactant intactId="EBI-16439278">
        <id>Q6FHY5</id>
        <label>MEOX2</label>
    </interactant>
    <organismsDiffer>false</organismsDiffer>
    <experiments>3</experiments>
</comment>
<comment type="interaction">
    <interactant intactId="EBI-2116102">
        <id>Q96NZ9</id>
    </interactant>
    <interactant intactId="EBI-995714">
        <id>Q9Y605</id>
        <label>MRFAP1</label>
    </interactant>
    <organismsDiffer>false</organismsDiffer>
    <experiments>3</experiments>
</comment>
<comment type="interaction">
    <interactant intactId="EBI-2116102">
        <id>Q96NZ9</id>
    </interactant>
    <interactant intactId="EBI-347996">
        <id>O43765</id>
        <label>SGTA</label>
    </interactant>
    <organismsDiffer>false</organismsDiffer>
    <experiments>9</experiments>
</comment>
<comment type="interaction">
    <interactant intactId="EBI-2116102">
        <id>Q96NZ9</id>
    </interactant>
    <interactant intactId="EBI-744081">
        <id>Q96EQ0</id>
        <label>SGTB</label>
    </interactant>
    <organismsDiffer>false</organismsDiffer>
    <experiments>3</experiments>
</comment>
<comment type="interaction">
    <interactant intactId="EBI-2116102">
        <id>Q96NZ9</id>
    </interactant>
    <interactant intactId="EBI-741480">
        <id>Q9UMX0</id>
        <label>UBQLN1</label>
    </interactant>
    <organismsDiffer>false</organismsDiffer>
    <experiments>6</experiments>
</comment>
<comment type="interaction">
    <interactant intactId="EBI-2116102">
        <id>Q96NZ9</id>
    </interactant>
    <interactant intactId="EBI-10173939">
        <id>Q9UMX0-2</id>
        <label>UBQLN1</label>
    </interactant>
    <organismsDiffer>false</organismsDiffer>
    <experiments>3</experiments>
</comment>
<comment type="interaction">
    <interactant intactId="EBI-2116102">
        <id>Q96NZ9</id>
    </interactant>
    <interactant intactId="EBI-947187">
        <id>Q9UHD9</id>
        <label>UBQLN2</label>
    </interactant>
    <organismsDiffer>false</organismsDiffer>
    <experiments>6</experiments>
</comment>
<comment type="subcellular location">
    <subcellularLocation>
        <location evidence="5">Secreted</location>
    </subcellularLocation>
    <subcellularLocation>
        <location evidence="1">Endoplasmic reticulum</location>
    </subcellularLocation>
</comment>
<comment type="alternative products">
    <event type="alternative splicing"/>
    <isoform>
        <id>Q96NZ9-1</id>
        <name>1</name>
        <name>PRAP</name>
        <sequence type="displayed"/>
    </isoform>
    <isoform>
        <id>Q96NZ9-2</id>
        <name>2</name>
        <sequence type="described" ref="VSP_027661 VSP_027662"/>
    </isoform>
    <isoform>
        <id>Q96NZ9-3</id>
        <name>3</name>
        <name>PRAPV1</name>
        <sequence type="described" ref="VSP_027660"/>
    </isoform>
    <isoform>
        <id>Q96NZ9-4</id>
        <name>4</name>
        <name>PRAPV2</name>
        <sequence type="described" ref="VSP_027661"/>
    </isoform>
</comment>
<comment type="tissue specificity">
    <text evidence="5 8 10 11">Highly expressed in the intestinal epithelial cells (at protein level) (PubMed:32629119). Abundantly expressed in the epithelial cells of the liver, kidney and cervix. Significantly down-regulated in hepatocellular carcinoma and right colon adenocarcinoma compared with the respective adjacent normal tissues. Expressed in epididymis (at protein level).</text>
</comment>
<comment type="induction">
    <text evidence="5 9">Up-regulated by butyrate, trichostatin A and 5'-aza-2' deoxycytidine (PubMed:14583459). Induced by DNA-damaging agents in a p53/TP53-dependent manner in HepG2 liver cancer cell line and HCT116 colon cancer cell line (PubMed:23235459).</text>
</comment>
<comment type="sequence caution" evidence="15">
    <conflict type="frameshift">
        <sequence resource="EMBL-CDS" id="AAP97247"/>
    </conflict>
</comment>
<sequence>MRRLLLVTSLVVVLLWEAGAVPAPKVPIKMQVKHWPSEQDPEKAWGARVVEPPEKDDQLVVLFPVQKPKLLTTEEKPRGQGRGPILPGTKAWMETEDTLGHVLSPEPDHDSLYHPPPEEDQGEERPRLWVMPNHQVLLGPEEDQDHIYHPQ</sequence>
<organism>
    <name type="scientific">Homo sapiens</name>
    <name type="common">Human</name>
    <dbReference type="NCBI Taxonomy" id="9606"/>
    <lineage>
        <taxon>Eukaryota</taxon>
        <taxon>Metazoa</taxon>
        <taxon>Chordata</taxon>
        <taxon>Craniata</taxon>
        <taxon>Vertebrata</taxon>
        <taxon>Euteleostomi</taxon>
        <taxon>Mammalia</taxon>
        <taxon>Eutheria</taxon>
        <taxon>Euarchontoglires</taxon>
        <taxon>Primates</taxon>
        <taxon>Haplorrhini</taxon>
        <taxon>Catarrhini</taxon>
        <taxon>Hominidae</taxon>
        <taxon>Homo</taxon>
    </lineage>
</organism>
<dbReference type="EMBL" id="AF421885">
    <property type="protein sequence ID" value="AAL16670.1"/>
    <property type="molecule type" value="mRNA"/>
</dbReference>
<dbReference type="EMBL" id="AY158074">
    <property type="protein sequence ID" value="AAN87018.1"/>
    <property type="molecule type" value="mRNA"/>
</dbReference>
<dbReference type="EMBL" id="AF123768">
    <property type="protein sequence ID" value="AAP97247.1"/>
    <property type="status" value="ALT_FRAME"/>
    <property type="molecule type" value="mRNA"/>
</dbReference>
<dbReference type="EMBL" id="AY358908">
    <property type="protein sequence ID" value="AAQ89267.1"/>
    <property type="molecule type" value="mRNA"/>
</dbReference>
<dbReference type="EMBL" id="GU727628">
    <property type="protein sequence ID" value="ADU87630.1"/>
    <property type="molecule type" value="mRNA"/>
</dbReference>
<dbReference type="EMBL" id="AL360181">
    <property type="status" value="NOT_ANNOTATED_CDS"/>
    <property type="molecule type" value="Genomic_DNA"/>
</dbReference>
<dbReference type="EMBL" id="CH471211">
    <property type="protein sequence ID" value="EAW61336.1"/>
    <property type="molecule type" value="Genomic_DNA"/>
</dbReference>
<dbReference type="EMBL" id="BC029447">
    <property type="protein sequence ID" value="AAH29447.2"/>
    <property type="molecule type" value="mRNA"/>
</dbReference>
<dbReference type="EMBL" id="BC061643">
    <property type="protein sequence ID" value="AAH61643.1"/>
    <property type="molecule type" value="mRNA"/>
</dbReference>
<dbReference type="EMBL" id="BC071872">
    <property type="protein sequence ID" value="AAH71872.1"/>
    <property type="molecule type" value="mRNA"/>
</dbReference>
<dbReference type="EMBL" id="BC093853">
    <property type="protein sequence ID" value="AAH93853.1"/>
    <property type="molecule type" value="mRNA"/>
</dbReference>
<dbReference type="EMBL" id="BC101743">
    <property type="protein sequence ID" value="AAI01744.1"/>
    <property type="molecule type" value="mRNA"/>
</dbReference>
<dbReference type="EMBL" id="BC143590">
    <property type="protein sequence ID" value="AAI43591.1"/>
    <property type="molecule type" value="mRNA"/>
</dbReference>
<dbReference type="EMBL" id="BC143592">
    <property type="protein sequence ID" value="AAI43593.1"/>
    <property type="molecule type" value="mRNA"/>
</dbReference>
<dbReference type="EMBL" id="BC143591">
    <property type="protein sequence ID" value="AAI43592.1"/>
    <property type="molecule type" value="mRNA"/>
</dbReference>
<dbReference type="CCDS" id="CCDS44498.1">
    <molecule id="Q96NZ9-4"/>
</dbReference>
<dbReference type="CCDS" id="CCDS7679.1">
    <molecule id="Q96NZ9-1"/>
</dbReference>
<dbReference type="RefSeq" id="NP_001138673.1">
    <molecule id="Q96NZ9-4"/>
    <property type="nucleotide sequence ID" value="NM_001145201.2"/>
</dbReference>
<dbReference type="RefSeq" id="NP_660203.3">
    <molecule id="Q96NZ9-1"/>
    <property type="nucleotide sequence ID" value="NM_145202.4"/>
</dbReference>
<dbReference type="BioGRID" id="125610">
    <property type="interactions" value="18"/>
</dbReference>
<dbReference type="FunCoup" id="Q96NZ9">
    <property type="interactions" value="153"/>
</dbReference>
<dbReference type="IntAct" id="Q96NZ9">
    <property type="interactions" value="17"/>
</dbReference>
<dbReference type="STRING" id="9606.ENSP00000416126"/>
<dbReference type="BindingDB" id="Q96NZ9"/>
<dbReference type="ChEMBL" id="CHEMBL4879502"/>
<dbReference type="GlyCosmos" id="Q96NZ9">
    <property type="glycosylation" value="1 site, 1 glycan"/>
</dbReference>
<dbReference type="GlyGen" id="Q96NZ9">
    <property type="glycosylation" value="7 sites, 2 O-linked glycans (6 sites)"/>
</dbReference>
<dbReference type="iPTMnet" id="Q96NZ9"/>
<dbReference type="PhosphoSitePlus" id="Q96NZ9"/>
<dbReference type="BioMuta" id="PRAP1"/>
<dbReference type="DMDM" id="317373269"/>
<dbReference type="jPOST" id="Q96NZ9"/>
<dbReference type="MassIVE" id="Q96NZ9"/>
<dbReference type="PaxDb" id="9606-ENSP00000416126"/>
<dbReference type="PeptideAtlas" id="Q96NZ9"/>
<dbReference type="ProteomicsDB" id="77584">
    <molecule id="Q96NZ9-2"/>
</dbReference>
<dbReference type="ProteomicsDB" id="77585">
    <molecule id="Q96NZ9-3"/>
</dbReference>
<dbReference type="ProteomicsDB" id="77586">
    <molecule id="Q96NZ9-4"/>
</dbReference>
<dbReference type="Antibodypedia" id="48788">
    <property type="antibodies" value="69 antibodies from 18 providers"/>
</dbReference>
<dbReference type="DNASU" id="118471"/>
<dbReference type="Ensembl" id="ENST00000433452.6">
    <molecule id="Q96NZ9-1"/>
    <property type="protein sequence ID" value="ENSP00000416126.2"/>
    <property type="gene ID" value="ENSG00000165828.15"/>
</dbReference>
<dbReference type="Ensembl" id="ENST00000463201.2">
    <molecule id="Q96NZ9-4"/>
    <property type="protein sequence ID" value="ENSP00000486265.1"/>
    <property type="gene ID" value="ENSG00000165828.15"/>
</dbReference>
<dbReference type="GeneID" id="118471"/>
<dbReference type="KEGG" id="hsa:118471"/>
<dbReference type="MANE-Select" id="ENST00000433452.6">
    <property type="protein sequence ID" value="ENSP00000416126.2"/>
    <property type="RefSeq nucleotide sequence ID" value="NM_145202.5"/>
    <property type="RefSeq protein sequence ID" value="NP_660203.3"/>
</dbReference>
<dbReference type="UCSC" id="uc001lmp.3">
    <molecule id="Q96NZ9-1"/>
    <property type="organism name" value="human"/>
</dbReference>
<dbReference type="AGR" id="HGNC:23304"/>
<dbReference type="CTD" id="118471"/>
<dbReference type="DisGeNET" id="118471"/>
<dbReference type="GeneCards" id="PRAP1"/>
<dbReference type="HGNC" id="HGNC:23304">
    <property type="gene designation" value="PRAP1"/>
</dbReference>
<dbReference type="HPA" id="ENSG00000165828">
    <property type="expression patterns" value="Group enriched (intestine, liver)"/>
</dbReference>
<dbReference type="MIM" id="609776">
    <property type="type" value="gene"/>
</dbReference>
<dbReference type="neXtProt" id="NX_Q96NZ9"/>
<dbReference type="OpenTargets" id="ENSG00000165828"/>
<dbReference type="PharmGKB" id="PA134981678"/>
<dbReference type="VEuPathDB" id="HostDB:ENSG00000165828"/>
<dbReference type="eggNOG" id="ENOG502TDVH">
    <property type="taxonomic scope" value="Eukaryota"/>
</dbReference>
<dbReference type="GeneTree" id="ENSGT00390000012626"/>
<dbReference type="InParanoid" id="Q96NZ9"/>
<dbReference type="OMA" id="WVETEDI"/>
<dbReference type="OrthoDB" id="9938040at2759"/>
<dbReference type="PAN-GO" id="Q96NZ9">
    <property type="GO annotations" value="0 GO annotations based on evolutionary models"/>
</dbReference>
<dbReference type="PhylomeDB" id="Q96NZ9"/>
<dbReference type="TreeFam" id="TF337049"/>
<dbReference type="PathwayCommons" id="Q96NZ9"/>
<dbReference type="SignaLink" id="Q96NZ9"/>
<dbReference type="BioGRID-ORCS" id="118471">
    <property type="hits" value="9 hits in 1130 CRISPR screens"/>
</dbReference>
<dbReference type="ChiTaRS" id="PRAP1">
    <property type="organism name" value="human"/>
</dbReference>
<dbReference type="GenomeRNAi" id="118471"/>
<dbReference type="Pharos" id="Q96NZ9">
    <property type="development level" value="Tchem"/>
</dbReference>
<dbReference type="PRO" id="PR:Q96NZ9"/>
<dbReference type="Proteomes" id="UP000005640">
    <property type="component" value="Chromosome 10"/>
</dbReference>
<dbReference type="RNAct" id="Q96NZ9">
    <property type="molecule type" value="protein"/>
</dbReference>
<dbReference type="Bgee" id="ENSG00000165828">
    <property type="expression patterns" value="Expressed in duodenum and 96 other cell types or tissues"/>
</dbReference>
<dbReference type="ExpressionAtlas" id="Q96NZ9">
    <property type="expression patterns" value="baseline and differential"/>
</dbReference>
<dbReference type="GO" id="GO:0005783">
    <property type="term" value="C:endoplasmic reticulum"/>
    <property type="evidence" value="ECO:0000250"/>
    <property type="project" value="UniProtKB"/>
</dbReference>
<dbReference type="GO" id="GO:0005576">
    <property type="term" value="C:extracellular region"/>
    <property type="evidence" value="ECO:0000250"/>
    <property type="project" value="UniProtKB"/>
</dbReference>
<dbReference type="GO" id="GO:0017129">
    <property type="term" value="F:triglyceride binding"/>
    <property type="evidence" value="ECO:0000250"/>
    <property type="project" value="UniProtKB"/>
</dbReference>
<dbReference type="GO" id="GO:0071481">
    <property type="term" value="P:cellular response to X-ray"/>
    <property type="evidence" value="ECO:0000250"/>
    <property type="project" value="UniProtKB"/>
</dbReference>
<dbReference type="GO" id="GO:1902426">
    <property type="term" value="P:deactivation of mitotic spindle assembly checkpoint"/>
    <property type="evidence" value="ECO:0000314"/>
    <property type="project" value="UniProtKB"/>
</dbReference>
<dbReference type="GO" id="GO:0006974">
    <property type="term" value="P:DNA damage response"/>
    <property type="evidence" value="ECO:0000314"/>
    <property type="project" value="UniProtKB"/>
</dbReference>
<dbReference type="GO" id="GO:0030330">
    <property type="term" value="P:DNA damage response, signal transduction by p53 class mediator"/>
    <property type="evidence" value="ECO:0000315"/>
    <property type="project" value="UniProtKB"/>
</dbReference>
<dbReference type="GO" id="GO:0043066">
    <property type="term" value="P:negative regulation of apoptotic process"/>
    <property type="evidence" value="ECO:0000315"/>
    <property type="project" value="UniProtKB"/>
</dbReference>
<dbReference type="GO" id="GO:1904731">
    <property type="term" value="P:positive regulation of intestinal lipid absorption"/>
    <property type="evidence" value="ECO:0000250"/>
    <property type="project" value="UniProtKB"/>
</dbReference>
<dbReference type="GO" id="GO:2001140">
    <property type="term" value="P:positive regulation of phospholipid transport"/>
    <property type="evidence" value="ECO:0000250"/>
    <property type="project" value="UniProtKB"/>
</dbReference>
<dbReference type="GO" id="GO:1905885">
    <property type="term" value="P:positive regulation of triglyceride transport"/>
    <property type="evidence" value="ECO:0000250"/>
    <property type="project" value="UniProtKB"/>
</dbReference>
<dbReference type="InterPro" id="IPR027922">
    <property type="entry name" value="PRAP"/>
</dbReference>
<dbReference type="PANTHER" id="PTHR37861">
    <property type="entry name" value="PROLINE-RICH ACIDIC PROTEIN 1"/>
    <property type="match status" value="1"/>
</dbReference>
<dbReference type="PANTHER" id="PTHR37861:SF1">
    <property type="entry name" value="PROLINE-RICH ACIDIC PROTEIN 1"/>
    <property type="match status" value="1"/>
</dbReference>
<dbReference type="Pfam" id="PF15314">
    <property type="entry name" value="PRAP"/>
    <property type="match status" value="1"/>
</dbReference>
<protein>
    <recommendedName>
        <fullName>Proline-rich acidic protein 1</fullName>
    </recommendedName>
    <alternativeName>
        <fullName>Epididymis tissue protein Li 178</fullName>
    </alternativeName>
    <alternativeName>
        <fullName>Uterine-specific proline-rich acidic protein</fullName>
    </alternativeName>
</protein>
<accession>Q96NZ9</accession>
<accession>B7ZL57</accession>
<accession>B7ZL58</accession>
<accession>E9KL31</accession>
<accession>Q5VWY4</accession>
<accession>Q7Z4X5</accession>
<accession>Q8IWR3</accession>
<accession>Q8NCS2</accession>
<reference key="1">
    <citation type="journal article" date="2003" name="Cancer Res.">
        <title>The proline-rich acidic protein is epigenetically regulated and inhibits growth of cancer cell lines.</title>
        <authorList>
            <person name="Zhang J."/>
            <person name="Wong H."/>
            <person name="Ramanan S."/>
            <person name="Cheong D."/>
            <person name="Leong A."/>
            <person name="Hooi S.C."/>
        </authorList>
    </citation>
    <scope>NUCLEOTIDE SEQUENCE [MRNA] (ISOFORMS 1; 2 AND 4)</scope>
    <scope>FUNCTION</scope>
    <scope>INDUCTION</scope>
    <scope>SUBCELLULAR LOCATION</scope>
    <scope>TISSUE SPECIFICITY</scope>
    <scope>VARIANTS GLY-54; ARG-69 AND ARG-101</scope>
</reference>
<reference key="2">
    <citation type="journal article" date="2010" name="Mol. Cell. Proteomics">
        <title>Systematic mapping and functional analysis of a family of human epididymal secretory sperm-located proteins.</title>
        <authorList>
            <person name="Li J."/>
            <person name="Liu F."/>
            <person name="Wang H."/>
            <person name="Liu X."/>
            <person name="Liu J."/>
            <person name="Li N."/>
            <person name="Wan F."/>
            <person name="Wang W."/>
            <person name="Zhang C."/>
            <person name="Jin S."/>
            <person name="Liu J."/>
            <person name="Zhu P."/>
            <person name="Liu Y."/>
        </authorList>
    </citation>
    <scope>NUCLEOTIDE SEQUENCE [MRNA] (ISOFORM 1)</scope>
    <scope>VARIANT ARG-101</scope>
    <scope>TISSUE SPECIFICITY</scope>
    <source>
        <tissue>Epididymis</tissue>
    </source>
</reference>
<reference key="3">
    <citation type="submission" date="1999-01" db="EMBL/GenBank/DDBJ databases">
        <title>A novel human cDNA homologous to Mus musculus uterine-specific proline-rich acidic protein mRNA.</title>
        <authorList>
            <person name="Zheng L.H."/>
            <person name="Yu L."/>
            <person name="Zhao S.Y."/>
        </authorList>
    </citation>
    <scope>NUCLEOTIDE SEQUENCE [MRNA] (ISOFORM 1)</scope>
    <scope>VARIANT ARG-101</scope>
</reference>
<reference key="4">
    <citation type="journal article" date="2003" name="Genome Res.">
        <title>The secreted protein discovery initiative (SPDI), a large-scale effort to identify novel human secreted and transmembrane proteins: a bioinformatics assessment.</title>
        <authorList>
            <person name="Clark H.F."/>
            <person name="Gurney A.L."/>
            <person name="Abaya E."/>
            <person name="Baker K."/>
            <person name="Baldwin D.T."/>
            <person name="Brush J."/>
            <person name="Chen J."/>
            <person name="Chow B."/>
            <person name="Chui C."/>
            <person name="Crowley C."/>
            <person name="Currell B."/>
            <person name="Deuel B."/>
            <person name="Dowd P."/>
            <person name="Eaton D."/>
            <person name="Foster J.S."/>
            <person name="Grimaldi C."/>
            <person name="Gu Q."/>
            <person name="Hass P.E."/>
            <person name="Heldens S."/>
            <person name="Huang A."/>
            <person name="Kim H.S."/>
            <person name="Klimowski L."/>
            <person name="Jin Y."/>
            <person name="Johnson S."/>
            <person name="Lee J."/>
            <person name="Lewis L."/>
            <person name="Liao D."/>
            <person name="Mark M.R."/>
            <person name="Robbie E."/>
            <person name="Sanchez C."/>
            <person name="Schoenfeld J."/>
            <person name="Seshagiri S."/>
            <person name="Simmons L."/>
            <person name="Singh J."/>
            <person name="Smith V."/>
            <person name="Stinson J."/>
            <person name="Vagts A."/>
            <person name="Vandlen R.L."/>
            <person name="Watanabe C."/>
            <person name="Wieand D."/>
            <person name="Woods K."/>
            <person name="Xie M.-H."/>
            <person name="Yansura D.G."/>
            <person name="Yi S."/>
            <person name="Yu G."/>
            <person name="Yuan J."/>
            <person name="Zhang M."/>
            <person name="Zhang Z."/>
            <person name="Goddard A.D."/>
            <person name="Wood W.I."/>
            <person name="Godowski P.J."/>
            <person name="Gray A.M."/>
        </authorList>
    </citation>
    <scope>NUCLEOTIDE SEQUENCE [LARGE SCALE MRNA] (ISOFORM 1)</scope>
    <scope>VARIANT ARG-101</scope>
</reference>
<reference key="5">
    <citation type="journal article" date="2004" name="Nature">
        <title>The DNA sequence and comparative analysis of human chromosome 10.</title>
        <authorList>
            <person name="Deloukas P."/>
            <person name="Earthrowl M.E."/>
            <person name="Grafham D.V."/>
            <person name="Rubenfield M."/>
            <person name="French L."/>
            <person name="Steward C.A."/>
            <person name="Sims S.K."/>
            <person name="Jones M.C."/>
            <person name="Searle S."/>
            <person name="Scott C."/>
            <person name="Howe K."/>
            <person name="Hunt S.E."/>
            <person name="Andrews T.D."/>
            <person name="Gilbert J.G.R."/>
            <person name="Swarbreck D."/>
            <person name="Ashurst J.L."/>
            <person name="Taylor A."/>
            <person name="Battles J."/>
            <person name="Bird C.P."/>
            <person name="Ainscough R."/>
            <person name="Almeida J.P."/>
            <person name="Ashwell R.I.S."/>
            <person name="Ambrose K.D."/>
            <person name="Babbage A.K."/>
            <person name="Bagguley C.L."/>
            <person name="Bailey J."/>
            <person name="Banerjee R."/>
            <person name="Bates K."/>
            <person name="Beasley H."/>
            <person name="Bray-Allen S."/>
            <person name="Brown A.J."/>
            <person name="Brown J.Y."/>
            <person name="Burford D.C."/>
            <person name="Burrill W."/>
            <person name="Burton J."/>
            <person name="Cahill P."/>
            <person name="Camire D."/>
            <person name="Carter N.P."/>
            <person name="Chapman J.C."/>
            <person name="Clark S.Y."/>
            <person name="Clarke G."/>
            <person name="Clee C.M."/>
            <person name="Clegg S."/>
            <person name="Corby N."/>
            <person name="Coulson A."/>
            <person name="Dhami P."/>
            <person name="Dutta I."/>
            <person name="Dunn M."/>
            <person name="Faulkner L."/>
            <person name="Frankish A."/>
            <person name="Frankland J.A."/>
            <person name="Garner P."/>
            <person name="Garnett J."/>
            <person name="Gribble S."/>
            <person name="Griffiths C."/>
            <person name="Grocock R."/>
            <person name="Gustafson E."/>
            <person name="Hammond S."/>
            <person name="Harley J.L."/>
            <person name="Hart E."/>
            <person name="Heath P.D."/>
            <person name="Ho T.P."/>
            <person name="Hopkins B."/>
            <person name="Horne J."/>
            <person name="Howden P.J."/>
            <person name="Huckle E."/>
            <person name="Hynds C."/>
            <person name="Johnson C."/>
            <person name="Johnson D."/>
            <person name="Kana A."/>
            <person name="Kay M."/>
            <person name="Kimberley A.M."/>
            <person name="Kershaw J.K."/>
            <person name="Kokkinaki M."/>
            <person name="Laird G.K."/>
            <person name="Lawlor S."/>
            <person name="Lee H.M."/>
            <person name="Leongamornlert D.A."/>
            <person name="Laird G."/>
            <person name="Lloyd C."/>
            <person name="Lloyd D.M."/>
            <person name="Loveland J."/>
            <person name="Lovell J."/>
            <person name="McLaren S."/>
            <person name="McLay K.E."/>
            <person name="McMurray A."/>
            <person name="Mashreghi-Mohammadi M."/>
            <person name="Matthews L."/>
            <person name="Milne S."/>
            <person name="Nickerson T."/>
            <person name="Nguyen M."/>
            <person name="Overton-Larty E."/>
            <person name="Palmer S.A."/>
            <person name="Pearce A.V."/>
            <person name="Peck A.I."/>
            <person name="Pelan S."/>
            <person name="Phillimore B."/>
            <person name="Porter K."/>
            <person name="Rice C.M."/>
            <person name="Rogosin A."/>
            <person name="Ross M.T."/>
            <person name="Sarafidou T."/>
            <person name="Sehra H.K."/>
            <person name="Shownkeen R."/>
            <person name="Skuce C.D."/>
            <person name="Smith M."/>
            <person name="Standring L."/>
            <person name="Sycamore N."/>
            <person name="Tester J."/>
            <person name="Thorpe A."/>
            <person name="Torcasso W."/>
            <person name="Tracey A."/>
            <person name="Tromans A."/>
            <person name="Tsolas J."/>
            <person name="Wall M."/>
            <person name="Walsh J."/>
            <person name="Wang H."/>
            <person name="Weinstock K."/>
            <person name="West A.P."/>
            <person name="Willey D.L."/>
            <person name="Whitehead S.L."/>
            <person name="Wilming L."/>
            <person name="Wray P.W."/>
            <person name="Young L."/>
            <person name="Chen Y."/>
            <person name="Lovering R.C."/>
            <person name="Moschonas N.K."/>
            <person name="Siebert R."/>
            <person name="Fechtel K."/>
            <person name="Bentley D."/>
            <person name="Durbin R.M."/>
            <person name="Hubbard T."/>
            <person name="Doucette-Stamm L."/>
            <person name="Beck S."/>
            <person name="Smith D.R."/>
            <person name="Rogers J."/>
        </authorList>
    </citation>
    <scope>NUCLEOTIDE SEQUENCE [LARGE SCALE GENOMIC DNA]</scope>
    <scope>VARIANT ARG-101</scope>
</reference>
<reference key="6">
    <citation type="submission" date="2005-09" db="EMBL/GenBank/DDBJ databases">
        <authorList>
            <person name="Mural R.J."/>
            <person name="Istrail S."/>
            <person name="Sutton G.G."/>
            <person name="Florea L."/>
            <person name="Halpern A.L."/>
            <person name="Mobarry C.M."/>
            <person name="Lippert R."/>
            <person name="Walenz B."/>
            <person name="Shatkay H."/>
            <person name="Dew I."/>
            <person name="Miller J.R."/>
            <person name="Flanigan M.J."/>
            <person name="Edwards N.J."/>
            <person name="Bolanos R."/>
            <person name="Fasulo D."/>
            <person name="Halldorsson B.V."/>
            <person name="Hannenhalli S."/>
            <person name="Turner R."/>
            <person name="Yooseph S."/>
            <person name="Lu F."/>
            <person name="Nusskern D.R."/>
            <person name="Shue B.C."/>
            <person name="Zheng X.H."/>
            <person name="Zhong F."/>
            <person name="Delcher A.L."/>
            <person name="Huson D.H."/>
            <person name="Kravitz S.A."/>
            <person name="Mouchard L."/>
            <person name="Reinert K."/>
            <person name="Remington K.A."/>
            <person name="Clark A.G."/>
            <person name="Waterman M.S."/>
            <person name="Eichler E.E."/>
            <person name="Adams M.D."/>
            <person name="Hunkapiller M.W."/>
            <person name="Myers E.W."/>
            <person name="Venter J.C."/>
        </authorList>
    </citation>
    <scope>NUCLEOTIDE SEQUENCE [LARGE SCALE GENOMIC DNA]</scope>
</reference>
<reference key="7">
    <citation type="journal article" date="2004" name="Genome Res.">
        <title>The status, quality, and expansion of the NIH full-length cDNA project: the Mammalian Gene Collection (MGC).</title>
        <authorList>
            <consortium name="The MGC Project Team"/>
        </authorList>
    </citation>
    <scope>NUCLEOTIDE SEQUENCE [LARGE SCALE MRNA] (ISOFORMS 1 AND 4)</scope>
    <scope>NUCLEOTIDE SEQUENCE [LARGE SCALE MRNA] OF 4-151 (ISOFORM 3)</scope>
    <scope>VARIANT ARG-101</scope>
    <source>
        <tissue>Liver</tissue>
        <tissue>Pancreas</tissue>
    </source>
</reference>
<reference key="8">
    <citation type="journal article" date="2012" name="Cell Death Dis.">
        <title>PRAP1 is a novel executor of p53-dependent mechanisms in cell survival after DNA damage.</title>
        <authorList>
            <person name="Huang B.H."/>
            <person name="Zhuo J.L."/>
            <person name="Leung C.H."/>
            <person name="Lu G.D."/>
            <person name="Liu J.J."/>
            <person name="Yap C.T."/>
            <person name="Hooi S.C."/>
        </authorList>
    </citation>
    <scope>FUNCTION</scope>
    <scope>INDUCTION</scope>
</reference>
<reference key="9">
    <citation type="journal article" date="2014" name="J. Pathol.">
        <title>Proline-rich acidic protein 1 (PRAP1) is a novel interacting partner of MAD1 and has a suppressive role in mitotic checkpoint signalling in hepatocellular carcinoma.</title>
        <authorList>
            <person name="Sze K.M."/>
            <person name="Chu G.K."/>
            <person name="Mak Q.H."/>
            <person name="Lee J.M."/>
            <person name="Ng I.O."/>
        </authorList>
    </citation>
    <scope>FUNCTION</scope>
    <scope>INTERACTION WITH MAD1L1</scope>
    <scope>TISSUE SPECIFICITY</scope>
</reference>
<reference key="10">
    <citation type="journal article" date="2020" name="Cell. Mol. Gastroenterol. Hepatol.">
        <title>Proline-Rich Acidic Protein 1 (PRAP1) Protects the Gastrointestinal Epithelium From Irradiation-Induced Apoptosis.</title>
        <authorList>
            <person name="Wolfarth A.A."/>
            <person name="Liu X."/>
            <person name="Darby T.M."/>
            <person name="Boyer D.J."/>
            <person name="Spizman J.B."/>
            <person name="Owens J.A."/>
            <person name="Chandrasekharan B."/>
            <person name="Naudin C.R."/>
            <person name="Hanley K.Z."/>
            <person name="Robinson B.S."/>
            <person name="Ortlund E.A."/>
            <person name="Jones R.M."/>
            <person name="Neish A.S."/>
        </authorList>
    </citation>
    <scope>TISSUE SPECIFICITY</scope>
</reference>
<evidence type="ECO:0000250" key="1">
    <source>
        <dbReference type="UniProtKB" id="Q80XD8"/>
    </source>
</evidence>
<evidence type="ECO:0000255" key="2"/>
<evidence type="ECO:0000256" key="3">
    <source>
        <dbReference type="SAM" id="MobiDB-lite"/>
    </source>
</evidence>
<evidence type="ECO:0000269" key="4">
    <source>
    </source>
</evidence>
<evidence type="ECO:0000269" key="5">
    <source>
    </source>
</evidence>
<evidence type="ECO:0000269" key="6">
    <source>
    </source>
</evidence>
<evidence type="ECO:0000269" key="7">
    <source>
    </source>
</evidence>
<evidence type="ECO:0000269" key="8">
    <source>
    </source>
</evidence>
<evidence type="ECO:0000269" key="9">
    <source>
    </source>
</evidence>
<evidence type="ECO:0000269" key="10">
    <source>
    </source>
</evidence>
<evidence type="ECO:0000269" key="11">
    <source>
    </source>
</evidence>
<evidence type="ECO:0000269" key="12">
    <source ref="3"/>
</evidence>
<evidence type="ECO:0000303" key="13">
    <source>
    </source>
</evidence>
<evidence type="ECO:0000303" key="14">
    <source>
    </source>
</evidence>
<evidence type="ECO:0000305" key="15"/>
<keyword id="KW-0025">Alternative splicing</keyword>
<keyword id="KW-0256">Endoplasmic reticulum</keyword>
<keyword id="KW-0446">Lipid-binding</keyword>
<keyword id="KW-1267">Proteomics identification</keyword>
<keyword id="KW-1185">Reference proteome</keyword>
<keyword id="KW-0964">Secreted</keyword>
<keyword id="KW-0732">Signal</keyword>
<name>PRAP1_HUMAN</name>
<feature type="signal peptide" evidence="2">
    <location>
        <begin position="1"/>
        <end position="20"/>
    </location>
</feature>
<feature type="chain" id="PRO_0000299416" description="Proline-rich acidic protein 1">
    <location>
        <begin position="21"/>
        <end position="151"/>
    </location>
</feature>
<feature type="region of interest" description="Disordered" evidence="3">
    <location>
        <begin position="71"/>
        <end position="151"/>
    </location>
</feature>
<feature type="splice variant" id="VSP_027660" description="In isoform 3." evidence="14">
    <original>K</original>
    <variation>NR</variation>
    <location>
        <position position="43"/>
    </location>
</feature>
<feature type="splice variant" id="VSP_027661" description="In isoform 2 and isoform 4." evidence="13 14">
    <location>
        <begin position="79"/>
        <end position="87"/>
    </location>
</feature>
<feature type="splice variant" id="VSP_027662" description="In isoform 2." evidence="13">
    <original>TEDTLGHVLSPEPDHDSLYHPPPEEDQGEERPRLWVMPNHQVLLGPEEDQDHIYHPQ</original>
    <variation>SRARP</variation>
    <location>
        <begin position="95"/>
        <end position="151"/>
    </location>
</feature>
<feature type="sequence variant" id="VAR_034815" description="In dbSNP:rs1848687860." evidence="5">
    <original>E</original>
    <variation>G</variation>
    <location>
        <position position="54"/>
    </location>
</feature>
<feature type="sequence variant" id="VAR_034816" evidence="5">
    <original>K</original>
    <variation>R</variation>
    <location>
        <position position="69"/>
    </location>
</feature>
<feature type="sequence variant" id="VAR_034817" description="In dbSNP:rs34780987.">
    <original>G</original>
    <variation>S</variation>
    <location>
        <position position="81"/>
    </location>
</feature>
<feature type="sequence variant" id="VAR_034818" description="In dbSNP:rs4369319." evidence="4 5 6 7 8 12">
    <original>H</original>
    <variation>R</variation>
    <location>
        <position position="101"/>
    </location>
</feature>
<gene>
    <name type="primary">PRAP1</name>
    <name type="synonym">UPA</name>
    <name type="ORF">UNQ608/PRO1195</name>
</gene>
<proteinExistence type="evidence at protein level"/>